<sequence length="119" mass="13173">MSDSDAMTDPNAVSYSNAIVVLCTAPDEASAQNLAAQVLGEKLAACVTLLPGATSLYYWEGKLEQEYEVQLLFKSNTDHQQALLTYIKQHHPYQTPELLVLPVRDGDKDYLSWLNASLL</sequence>
<gene>
    <name evidence="1" type="primary">cutA</name>
    <name type="ordered locus">YpsIP31758_3680</name>
</gene>
<protein>
    <recommendedName>
        <fullName evidence="1">Divalent-cation tolerance protein CutA</fullName>
    </recommendedName>
</protein>
<organism>
    <name type="scientific">Yersinia pseudotuberculosis serotype O:1b (strain IP 31758)</name>
    <dbReference type="NCBI Taxonomy" id="349747"/>
    <lineage>
        <taxon>Bacteria</taxon>
        <taxon>Pseudomonadati</taxon>
        <taxon>Pseudomonadota</taxon>
        <taxon>Gammaproteobacteria</taxon>
        <taxon>Enterobacterales</taxon>
        <taxon>Yersiniaceae</taxon>
        <taxon>Yersinia</taxon>
    </lineage>
</organism>
<name>CUTA_YERP3</name>
<dbReference type="EMBL" id="CP000720">
    <property type="protein sequence ID" value="ABS49887.1"/>
    <property type="molecule type" value="Genomic_DNA"/>
</dbReference>
<dbReference type="RefSeq" id="WP_002209122.1">
    <property type="nucleotide sequence ID" value="NC_009708.1"/>
</dbReference>
<dbReference type="SMR" id="A7FN06"/>
<dbReference type="GeneID" id="57974262"/>
<dbReference type="KEGG" id="ypi:YpsIP31758_3680"/>
<dbReference type="HOGENOM" id="CLU_098807_3_0_6"/>
<dbReference type="Proteomes" id="UP000002412">
    <property type="component" value="Chromosome"/>
</dbReference>
<dbReference type="GO" id="GO:0005737">
    <property type="term" value="C:cytoplasm"/>
    <property type="evidence" value="ECO:0007669"/>
    <property type="project" value="UniProtKB-SubCell"/>
</dbReference>
<dbReference type="GO" id="GO:0005507">
    <property type="term" value="F:copper ion binding"/>
    <property type="evidence" value="ECO:0007669"/>
    <property type="project" value="UniProtKB-UniRule"/>
</dbReference>
<dbReference type="GO" id="GO:0010038">
    <property type="term" value="P:response to metal ion"/>
    <property type="evidence" value="ECO:0007669"/>
    <property type="project" value="InterPro"/>
</dbReference>
<dbReference type="FunFam" id="3.30.70.120:FF:000004">
    <property type="entry name" value="Divalent-cation tolerance protein CutA"/>
    <property type="match status" value="1"/>
</dbReference>
<dbReference type="Gene3D" id="3.30.70.120">
    <property type="match status" value="1"/>
</dbReference>
<dbReference type="HAMAP" id="MF_01160">
    <property type="entry name" value="CutA"/>
    <property type="match status" value="1"/>
</dbReference>
<dbReference type="InterPro" id="IPR023700">
    <property type="entry name" value="CutA_Enterobact"/>
</dbReference>
<dbReference type="InterPro" id="IPR004323">
    <property type="entry name" value="Ion_tolerance_CutA"/>
</dbReference>
<dbReference type="InterPro" id="IPR011322">
    <property type="entry name" value="N-reg_PII-like_a/b"/>
</dbReference>
<dbReference type="InterPro" id="IPR015867">
    <property type="entry name" value="N-reg_PII/ATP_PRibTrfase_C"/>
</dbReference>
<dbReference type="NCBIfam" id="NF007930">
    <property type="entry name" value="PRK10645.1"/>
    <property type="match status" value="1"/>
</dbReference>
<dbReference type="PANTHER" id="PTHR23419">
    <property type="entry name" value="DIVALENT CATION TOLERANCE CUTA-RELATED"/>
    <property type="match status" value="1"/>
</dbReference>
<dbReference type="PANTHER" id="PTHR23419:SF8">
    <property type="entry name" value="FI09726P"/>
    <property type="match status" value="1"/>
</dbReference>
<dbReference type="Pfam" id="PF03091">
    <property type="entry name" value="CutA1"/>
    <property type="match status" value="1"/>
</dbReference>
<dbReference type="SUPFAM" id="SSF54913">
    <property type="entry name" value="GlnB-like"/>
    <property type="match status" value="1"/>
</dbReference>
<comment type="function">
    <text evidence="1">Involved in resistance toward heavy metals.</text>
</comment>
<comment type="cofactor">
    <cofactor evidence="1">
        <name>Cu cation</name>
        <dbReference type="ChEBI" id="CHEBI:23378"/>
    </cofactor>
    <text evidence="1">Binds 1 copper ion per subunit.</text>
</comment>
<comment type="subunit">
    <text evidence="1">Homotrimer.</text>
</comment>
<comment type="subcellular location">
    <subcellularLocation>
        <location evidence="1">Cytoplasm</location>
    </subcellularLocation>
</comment>
<comment type="similarity">
    <text evidence="1">Belongs to the CutA family.</text>
</comment>
<feature type="chain" id="PRO_1000065599" description="Divalent-cation tolerance protein CutA">
    <location>
        <begin position="1"/>
        <end position="119"/>
    </location>
</feature>
<feature type="binding site" evidence="1">
    <location>
        <position position="23"/>
    </location>
    <ligand>
        <name>Cu cation</name>
        <dbReference type="ChEBI" id="CHEBI:23378"/>
    </ligand>
</feature>
<feature type="binding site" evidence="1">
    <location>
        <position position="90"/>
    </location>
    <ligand>
        <name>Cu cation</name>
        <dbReference type="ChEBI" id="CHEBI:23378"/>
    </ligand>
</feature>
<feature type="binding site" evidence="1">
    <location>
        <position position="91"/>
    </location>
    <ligand>
        <name>Cu cation</name>
        <dbReference type="ChEBI" id="CHEBI:23378"/>
    </ligand>
</feature>
<evidence type="ECO:0000255" key="1">
    <source>
        <dbReference type="HAMAP-Rule" id="MF_01160"/>
    </source>
</evidence>
<proteinExistence type="inferred from homology"/>
<accession>A7FN06</accession>
<keyword id="KW-0186">Copper</keyword>
<keyword id="KW-0963">Cytoplasm</keyword>
<keyword id="KW-0479">Metal-binding</keyword>
<reference key="1">
    <citation type="journal article" date="2007" name="PLoS Genet.">
        <title>The complete genome sequence of Yersinia pseudotuberculosis IP31758, the causative agent of Far East scarlet-like fever.</title>
        <authorList>
            <person name="Eppinger M."/>
            <person name="Rosovitz M.J."/>
            <person name="Fricke W.F."/>
            <person name="Rasko D.A."/>
            <person name="Kokorina G."/>
            <person name="Fayolle C."/>
            <person name="Lindler L.E."/>
            <person name="Carniel E."/>
            <person name="Ravel J."/>
        </authorList>
    </citation>
    <scope>NUCLEOTIDE SEQUENCE [LARGE SCALE GENOMIC DNA]</scope>
    <source>
        <strain>IP 31758</strain>
    </source>
</reference>